<keyword id="KW-0067">ATP-binding</keyword>
<keyword id="KW-0460">Magnesium</keyword>
<keyword id="KW-0464">Manganese</keyword>
<keyword id="KW-0479">Metal-binding</keyword>
<keyword id="KW-0547">Nucleotide-binding</keyword>
<keyword id="KW-0548">Nucleotidyltransferase</keyword>
<keyword id="KW-0808">Transferase</keyword>
<dbReference type="EC" id="2.7.7.-" evidence="1"/>
<dbReference type="EC" id="2.7.7.108" evidence="1"/>
<dbReference type="EMBL" id="CP000384">
    <property type="protein sequence ID" value="ABG11304.1"/>
    <property type="molecule type" value="Genomic_DNA"/>
</dbReference>
<dbReference type="SMR" id="Q1B1D0"/>
<dbReference type="KEGG" id="mmc:Mmcs_5202"/>
<dbReference type="HOGENOM" id="CLU_010245_4_1_11"/>
<dbReference type="BioCyc" id="MSP164756:G1G6O-5315-MONOMER"/>
<dbReference type="GO" id="GO:0070733">
    <property type="term" value="F:AMPylase activity"/>
    <property type="evidence" value="ECO:0007669"/>
    <property type="project" value="RHEA"/>
</dbReference>
<dbReference type="GO" id="GO:0005524">
    <property type="term" value="F:ATP binding"/>
    <property type="evidence" value="ECO:0007669"/>
    <property type="project" value="UniProtKB-UniRule"/>
</dbReference>
<dbReference type="GO" id="GO:0000287">
    <property type="term" value="F:magnesium ion binding"/>
    <property type="evidence" value="ECO:0007669"/>
    <property type="project" value="UniProtKB-UniRule"/>
</dbReference>
<dbReference type="HAMAP" id="MF_00692">
    <property type="entry name" value="YdiU_SelO"/>
    <property type="match status" value="1"/>
</dbReference>
<dbReference type="InterPro" id="IPR003846">
    <property type="entry name" value="SelO"/>
</dbReference>
<dbReference type="NCBIfam" id="NF000658">
    <property type="entry name" value="PRK00029.1"/>
    <property type="match status" value="1"/>
</dbReference>
<dbReference type="PANTHER" id="PTHR32057">
    <property type="entry name" value="PROTEIN ADENYLYLTRANSFERASE SELO, MITOCHONDRIAL"/>
    <property type="match status" value="1"/>
</dbReference>
<dbReference type="PANTHER" id="PTHR32057:SF14">
    <property type="entry name" value="PROTEIN ADENYLYLTRANSFERASE SELO, MITOCHONDRIAL"/>
    <property type="match status" value="1"/>
</dbReference>
<dbReference type="Pfam" id="PF02696">
    <property type="entry name" value="SelO"/>
    <property type="match status" value="1"/>
</dbReference>
<feature type="chain" id="PRO_0000271834" description="Protein nucleotidyltransferase YdiU">
    <location>
        <begin position="1"/>
        <end position="481"/>
    </location>
</feature>
<feature type="active site" description="Proton acceptor" evidence="1">
    <location>
        <position position="249"/>
    </location>
</feature>
<feature type="binding site" evidence="1">
    <location>
        <position position="87"/>
    </location>
    <ligand>
        <name>ATP</name>
        <dbReference type="ChEBI" id="CHEBI:30616"/>
    </ligand>
</feature>
<feature type="binding site" evidence="1">
    <location>
        <position position="89"/>
    </location>
    <ligand>
        <name>ATP</name>
        <dbReference type="ChEBI" id="CHEBI:30616"/>
    </ligand>
</feature>
<feature type="binding site" evidence="1">
    <location>
        <position position="90"/>
    </location>
    <ligand>
        <name>ATP</name>
        <dbReference type="ChEBI" id="CHEBI:30616"/>
    </ligand>
</feature>
<feature type="binding site" evidence="1">
    <location>
        <position position="110"/>
    </location>
    <ligand>
        <name>ATP</name>
        <dbReference type="ChEBI" id="CHEBI:30616"/>
    </ligand>
</feature>
<feature type="binding site" evidence="1">
    <location>
        <position position="122"/>
    </location>
    <ligand>
        <name>ATP</name>
        <dbReference type="ChEBI" id="CHEBI:30616"/>
    </ligand>
</feature>
<feature type="binding site" evidence="1">
    <location>
        <position position="123"/>
    </location>
    <ligand>
        <name>ATP</name>
        <dbReference type="ChEBI" id="CHEBI:30616"/>
    </ligand>
</feature>
<feature type="binding site" evidence="1">
    <location>
        <position position="173"/>
    </location>
    <ligand>
        <name>ATP</name>
        <dbReference type="ChEBI" id="CHEBI:30616"/>
    </ligand>
</feature>
<feature type="binding site" evidence="1">
    <location>
        <position position="180"/>
    </location>
    <ligand>
        <name>ATP</name>
        <dbReference type="ChEBI" id="CHEBI:30616"/>
    </ligand>
</feature>
<feature type="binding site" evidence="1">
    <location>
        <position position="250"/>
    </location>
    <ligand>
        <name>Mg(2+)</name>
        <dbReference type="ChEBI" id="CHEBI:18420"/>
    </ligand>
</feature>
<feature type="binding site" evidence="1">
    <location>
        <position position="259"/>
    </location>
    <ligand>
        <name>ATP</name>
        <dbReference type="ChEBI" id="CHEBI:30616"/>
    </ligand>
</feature>
<feature type="binding site" evidence="1">
    <location>
        <position position="259"/>
    </location>
    <ligand>
        <name>Mg(2+)</name>
        <dbReference type="ChEBI" id="CHEBI:18420"/>
    </ligand>
</feature>
<name>SELO_MYCSS</name>
<comment type="function">
    <text evidence="1">Nucleotidyltransferase involved in the post-translational modification of proteins. It can catalyze the addition of adenosine monophosphate (AMP) or uridine monophosphate (UMP) to a protein, resulting in modifications known as AMPylation and UMPylation.</text>
</comment>
<comment type="catalytic activity">
    <reaction evidence="1">
        <text>L-seryl-[protein] + ATP = 3-O-(5'-adenylyl)-L-seryl-[protein] + diphosphate</text>
        <dbReference type="Rhea" id="RHEA:58120"/>
        <dbReference type="Rhea" id="RHEA-COMP:9863"/>
        <dbReference type="Rhea" id="RHEA-COMP:15073"/>
        <dbReference type="ChEBI" id="CHEBI:29999"/>
        <dbReference type="ChEBI" id="CHEBI:30616"/>
        <dbReference type="ChEBI" id="CHEBI:33019"/>
        <dbReference type="ChEBI" id="CHEBI:142516"/>
        <dbReference type="EC" id="2.7.7.108"/>
    </reaction>
</comment>
<comment type="catalytic activity">
    <reaction evidence="1">
        <text>L-threonyl-[protein] + ATP = 3-O-(5'-adenylyl)-L-threonyl-[protein] + diphosphate</text>
        <dbReference type="Rhea" id="RHEA:54292"/>
        <dbReference type="Rhea" id="RHEA-COMP:11060"/>
        <dbReference type="Rhea" id="RHEA-COMP:13847"/>
        <dbReference type="ChEBI" id="CHEBI:30013"/>
        <dbReference type="ChEBI" id="CHEBI:30616"/>
        <dbReference type="ChEBI" id="CHEBI:33019"/>
        <dbReference type="ChEBI" id="CHEBI:138113"/>
        <dbReference type="EC" id="2.7.7.108"/>
    </reaction>
</comment>
<comment type="catalytic activity">
    <reaction evidence="1">
        <text>L-tyrosyl-[protein] + ATP = O-(5'-adenylyl)-L-tyrosyl-[protein] + diphosphate</text>
        <dbReference type="Rhea" id="RHEA:54288"/>
        <dbReference type="Rhea" id="RHEA-COMP:10136"/>
        <dbReference type="Rhea" id="RHEA-COMP:13846"/>
        <dbReference type="ChEBI" id="CHEBI:30616"/>
        <dbReference type="ChEBI" id="CHEBI:33019"/>
        <dbReference type="ChEBI" id="CHEBI:46858"/>
        <dbReference type="ChEBI" id="CHEBI:83624"/>
        <dbReference type="EC" id="2.7.7.108"/>
    </reaction>
</comment>
<comment type="catalytic activity">
    <reaction evidence="1">
        <text>L-histidyl-[protein] + UTP = N(tele)-(5'-uridylyl)-L-histidyl-[protein] + diphosphate</text>
        <dbReference type="Rhea" id="RHEA:83891"/>
        <dbReference type="Rhea" id="RHEA-COMP:9745"/>
        <dbReference type="Rhea" id="RHEA-COMP:20239"/>
        <dbReference type="ChEBI" id="CHEBI:29979"/>
        <dbReference type="ChEBI" id="CHEBI:33019"/>
        <dbReference type="ChEBI" id="CHEBI:46398"/>
        <dbReference type="ChEBI" id="CHEBI:233474"/>
    </reaction>
</comment>
<comment type="catalytic activity">
    <reaction evidence="1">
        <text>L-seryl-[protein] + UTP = O-(5'-uridylyl)-L-seryl-[protein] + diphosphate</text>
        <dbReference type="Rhea" id="RHEA:64604"/>
        <dbReference type="Rhea" id="RHEA-COMP:9863"/>
        <dbReference type="Rhea" id="RHEA-COMP:16635"/>
        <dbReference type="ChEBI" id="CHEBI:29999"/>
        <dbReference type="ChEBI" id="CHEBI:33019"/>
        <dbReference type="ChEBI" id="CHEBI:46398"/>
        <dbReference type="ChEBI" id="CHEBI:156051"/>
    </reaction>
</comment>
<comment type="catalytic activity">
    <reaction evidence="1">
        <text>L-tyrosyl-[protein] + UTP = O-(5'-uridylyl)-L-tyrosyl-[protein] + diphosphate</text>
        <dbReference type="Rhea" id="RHEA:83887"/>
        <dbReference type="Rhea" id="RHEA-COMP:10136"/>
        <dbReference type="Rhea" id="RHEA-COMP:20238"/>
        <dbReference type="ChEBI" id="CHEBI:33019"/>
        <dbReference type="ChEBI" id="CHEBI:46398"/>
        <dbReference type="ChEBI" id="CHEBI:46858"/>
        <dbReference type="ChEBI" id="CHEBI:90602"/>
    </reaction>
</comment>
<comment type="cofactor">
    <cofactor evidence="1">
        <name>Mg(2+)</name>
        <dbReference type="ChEBI" id="CHEBI:18420"/>
    </cofactor>
    <cofactor evidence="1">
        <name>Mn(2+)</name>
        <dbReference type="ChEBI" id="CHEBI:29035"/>
    </cofactor>
</comment>
<comment type="similarity">
    <text evidence="1">Belongs to the SELO family.</text>
</comment>
<reference key="1">
    <citation type="submission" date="2006-06" db="EMBL/GenBank/DDBJ databases">
        <title>Complete sequence of chromosome of Mycobacterium sp. MCS.</title>
        <authorList>
            <consortium name="US DOE Joint Genome Institute"/>
            <person name="Copeland A."/>
            <person name="Lucas S."/>
            <person name="Lapidus A."/>
            <person name="Barry K."/>
            <person name="Detter J.C."/>
            <person name="Glavina del Rio T."/>
            <person name="Hammon N."/>
            <person name="Israni S."/>
            <person name="Dalin E."/>
            <person name="Tice H."/>
            <person name="Pitluck S."/>
            <person name="Martinez M."/>
            <person name="Schmutz J."/>
            <person name="Larimer F."/>
            <person name="Land M."/>
            <person name="Hauser L."/>
            <person name="Kyrpides N."/>
            <person name="Kim E."/>
            <person name="Miller C.D."/>
            <person name="Hughes J.E."/>
            <person name="Anderson A.J."/>
            <person name="Sims R.C."/>
            <person name="Richardson P."/>
        </authorList>
    </citation>
    <scope>NUCLEOTIDE SEQUENCE [LARGE SCALE GENOMIC DNA]</scope>
    <source>
        <strain>MCS</strain>
    </source>
</reference>
<evidence type="ECO:0000255" key="1">
    <source>
        <dbReference type="HAMAP-Rule" id="MF_00692"/>
    </source>
</evidence>
<protein>
    <recommendedName>
        <fullName evidence="1">Protein nucleotidyltransferase YdiU</fullName>
        <ecNumber evidence="1">2.7.7.-</ecNumber>
    </recommendedName>
    <alternativeName>
        <fullName evidence="1">Protein adenylyltransferase YdiU</fullName>
        <ecNumber evidence="1">2.7.7.108</ecNumber>
    </alternativeName>
    <alternativeName>
        <fullName evidence="1">Protein uridylyltransferase YdiU</fullName>
        <ecNumber evidence="1">2.7.7.-</ecNumber>
    </alternativeName>
</protein>
<organism>
    <name type="scientific">Mycobacterium sp. (strain MCS)</name>
    <dbReference type="NCBI Taxonomy" id="164756"/>
    <lineage>
        <taxon>Bacteria</taxon>
        <taxon>Bacillati</taxon>
        <taxon>Actinomycetota</taxon>
        <taxon>Actinomycetes</taxon>
        <taxon>Mycobacteriales</taxon>
        <taxon>Mycobacteriaceae</taxon>
        <taxon>Mycobacterium</taxon>
    </lineage>
</organism>
<sequence>MTNLSLDGRFARELPEMAVRWKAEEAPDPRLLVLNDELASGLGLDADWLRSPDGVRLLVGNSVPDGATPVAQAYAGHQFGGFAPRLGDGRALLLGELVDGDGRMRDVHLKGSGHTPFARAGDGLAAVGPMLREYLVSEAMHALGIPTTRSLAVVATGRPVRRESVLDGAVLTRVASSHLRVGSFQYAAVTGDTDLVRRLAGHAIARHHPEVAGAADPYLGLFEAVCSAQAQLIARWMLVGFVHGVMNTDNMTISGETIDYGPCAFMDVYDPETVFSSIDSWGRYAYGNQPSIAAWNLARFAETLLPLFDDDIDRAITLAQNALGAFGRHYEGALTAGMQAKLGLTGVDGPAVAPLLDELLKLLQDNHIDFTSFFRALGLAARGDNEPVRGLFVDLAGFDAWLDSWRALGPDGAAMDRVNPVYIPRNHLVEEALTAAAAGDMEPFETLLDAVTGPFDERPGLQRYAEPAPEAFGRYRTFCGT</sequence>
<accession>Q1B1D0</accession>
<proteinExistence type="inferred from homology"/>
<gene>
    <name evidence="1" type="primary">ydiU</name>
    <name evidence="1" type="synonym">selO</name>
    <name type="ordered locus">Mmcs_5202</name>
</gene>